<organism>
    <name type="scientific">Bos taurus</name>
    <name type="common">Bovine</name>
    <dbReference type="NCBI Taxonomy" id="9913"/>
    <lineage>
        <taxon>Eukaryota</taxon>
        <taxon>Metazoa</taxon>
        <taxon>Chordata</taxon>
        <taxon>Craniata</taxon>
        <taxon>Vertebrata</taxon>
        <taxon>Euteleostomi</taxon>
        <taxon>Mammalia</taxon>
        <taxon>Eutheria</taxon>
        <taxon>Laurasiatheria</taxon>
        <taxon>Artiodactyla</taxon>
        <taxon>Ruminantia</taxon>
        <taxon>Pecora</taxon>
        <taxon>Bovidae</taxon>
        <taxon>Bovinae</taxon>
        <taxon>Bos</taxon>
    </lineage>
</organism>
<name>FGF5_BOVIN</name>
<keyword id="KW-0325">Glycoprotein</keyword>
<keyword id="KW-0339">Growth factor</keyword>
<keyword id="KW-0497">Mitogen</keyword>
<keyword id="KW-1185">Reference proteome</keyword>
<keyword id="KW-0964">Secreted</keyword>
<keyword id="KW-0732">Signal</keyword>
<accession>A0MTF4</accession>
<evidence type="ECO:0000250" key="1"/>
<evidence type="ECO:0000250" key="2">
    <source>
        <dbReference type="UniProtKB" id="Q20FD0"/>
    </source>
</evidence>
<evidence type="ECO:0000255" key="3"/>
<evidence type="ECO:0000256" key="4">
    <source>
        <dbReference type="SAM" id="MobiDB-lite"/>
    </source>
</evidence>
<evidence type="ECO:0000305" key="5"/>
<comment type="function">
    <text evidence="2">Plays an important role in the regulation of cell proliferation and cell differentiation. Required for normal regulation of the hair growth cycle. Functions as an inhibitor of hair elongation by promoting progression from anagen, the growth phase of the hair follicle, into catagen the apoptosis-induced regression phase (By similarity).</text>
</comment>
<comment type="subunit">
    <text evidence="1">Interacts with FGFR1 and FGFR2. Affinity between fibroblast growth factors (FGFs) and their receptors is increased by heparan sulfate glycosaminoglycans that function as coreceptors (By similarity).</text>
</comment>
<comment type="subcellular location">
    <subcellularLocation>
        <location evidence="5">Secreted</location>
    </subcellularLocation>
</comment>
<comment type="similarity">
    <text evidence="5">Belongs to the heparin-binding growth factors family.</text>
</comment>
<protein>
    <recommendedName>
        <fullName>Fibroblast growth factor 5</fullName>
        <shortName>FGF-5</shortName>
    </recommendedName>
</protein>
<reference key="1">
    <citation type="submission" date="2006-10" db="EMBL/GenBank/DDBJ databases">
        <title>Genetic studies of coat colors and length in Highland cattle.</title>
        <authorList>
            <person name="Schmutz S.M."/>
            <person name="Berryere T.G."/>
            <person name="Oulmouden A."/>
        </authorList>
    </citation>
    <scope>NUCLEOTIDE SEQUENCE [MRNA]</scope>
    <source>
        <tissue>Skin</tissue>
    </source>
</reference>
<proteinExistence type="evidence at transcript level"/>
<feature type="signal peptide" evidence="3">
    <location>
        <begin position="1"/>
        <end position="20"/>
    </location>
</feature>
<feature type="chain" id="PRO_0000279863" description="Fibroblast growth factor 5">
    <location>
        <begin position="21"/>
        <end position="270"/>
    </location>
</feature>
<feature type="region of interest" description="Disordered" evidence="4">
    <location>
        <begin position="25"/>
        <end position="86"/>
    </location>
</feature>
<feature type="region of interest" description="Disordered" evidence="4">
    <location>
        <begin position="237"/>
        <end position="257"/>
    </location>
</feature>
<feature type="compositionally biased region" description="Low complexity" evidence="4">
    <location>
        <begin position="41"/>
        <end position="69"/>
    </location>
</feature>
<feature type="compositionally biased region" description="Polar residues" evidence="4">
    <location>
        <begin position="76"/>
        <end position="86"/>
    </location>
</feature>
<feature type="glycosylation site" description="N-linked (GlcNAc...) asparagine" evidence="3">
    <location>
        <position position="112"/>
    </location>
</feature>
<gene>
    <name type="primary">FGF5</name>
</gene>
<sequence>MSLSFLLLLFLSHLILSAWAQGEKRLAPKGQPGPAATERNPGGASSRRSSSSTATSSSSPASSSSAASRGGPGSSLEQSSFQWSPSGRRTGSLYCRVGIGFHLQIYPDGKVNGSHEANMLSILEIFAVSQGIVGIRGVFSNKFLAMSKKGKLHASAKFTDDCKFRERFQENSYNTYASAIHRTEKTGREWYVALNKRGKAKRGCSPRVKPQHVSTHFLPRFKQLEQPELSFTVTVPEKKKPPNPVKPKVPLSAPRRSPNTVKYRLKFRFG</sequence>
<dbReference type="EMBL" id="EF042192">
    <property type="protein sequence ID" value="ABK34274.1"/>
    <property type="molecule type" value="mRNA"/>
</dbReference>
<dbReference type="RefSeq" id="NP_001071479.2">
    <property type="nucleotide sequence ID" value="NM_001078011.2"/>
</dbReference>
<dbReference type="SMR" id="A0MTF4"/>
<dbReference type="FunCoup" id="A0MTF4">
    <property type="interactions" value="483"/>
</dbReference>
<dbReference type="STRING" id="9913.ENSBTAP00000023064"/>
<dbReference type="GlyCosmos" id="A0MTF4">
    <property type="glycosylation" value="1 site, No reported glycans"/>
</dbReference>
<dbReference type="GlyGen" id="A0MTF4">
    <property type="glycosylation" value="1 site"/>
</dbReference>
<dbReference type="PaxDb" id="9913-ENSBTAP00000023064"/>
<dbReference type="GeneID" id="536771"/>
<dbReference type="KEGG" id="bta:536771"/>
<dbReference type="CTD" id="2250"/>
<dbReference type="VEuPathDB" id="HostDB:ENSBTAG00000017348"/>
<dbReference type="eggNOG" id="KOG3885">
    <property type="taxonomic scope" value="Eukaryota"/>
</dbReference>
<dbReference type="HOGENOM" id="CLU_081609_7_0_1"/>
<dbReference type="InParanoid" id="A0MTF4"/>
<dbReference type="OMA" id="AKFTEDC"/>
<dbReference type="OrthoDB" id="9947297at2759"/>
<dbReference type="TreeFam" id="TF317805"/>
<dbReference type="Reactome" id="R-BTA-109704">
    <property type="pathway name" value="PI3K Cascade"/>
</dbReference>
<dbReference type="Reactome" id="R-BTA-1257604">
    <property type="pathway name" value="PIP3 activates AKT signaling"/>
</dbReference>
<dbReference type="Reactome" id="R-BTA-190372">
    <property type="pathway name" value="FGFR3c ligand binding and activation"/>
</dbReference>
<dbReference type="Reactome" id="R-BTA-190373">
    <property type="pathway name" value="FGFR1c ligand binding and activation"/>
</dbReference>
<dbReference type="Reactome" id="R-BTA-190375">
    <property type="pathway name" value="FGFR2c ligand binding and activation"/>
</dbReference>
<dbReference type="Reactome" id="R-BTA-5654219">
    <property type="pathway name" value="Phospholipase C-mediated cascade: FGFR1"/>
</dbReference>
<dbReference type="Reactome" id="R-BTA-5654221">
    <property type="pathway name" value="Phospholipase C-mediated cascade, FGFR2"/>
</dbReference>
<dbReference type="Reactome" id="R-BTA-5654227">
    <property type="pathway name" value="Phospholipase C-mediated cascade, FGFR3"/>
</dbReference>
<dbReference type="Reactome" id="R-BTA-5654687">
    <property type="pathway name" value="Downstream signaling of activated FGFR1"/>
</dbReference>
<dbReference type="Reactome" id="R-BTA-5654688">
    <property type="pathway name" value="SHC-mediated cascade:FGFR1"/>
</dbReference>
<dbReference type="Reactome" id="R-BTA-5654689">
    <property type="pathway name" value="PI-3K cascade:FGFR1"/>
</dbReference>
<dbReference type="Reactome" id="R-BTA-5654693">
    <property type="pathway name" value="FRS-mediated FGFR1 signaling"/>
</dbReference>
<dbReference type="Reactome" id="R-BTA-5654695">
    <property type="pathway name" value="PI-3K cascade:FGFR2"/>
</dbReference>
<dbReference type="Reactome" id="R-BTA-5654699">
    <property type="pathway name" value="SHC-mediated cascade:FGFR2"/>
</dbReference>
<dbReference type="Reactome" id="R-BTA-5654700">
    <property type="pathway name" value="FRS-mediated FGFR2 signaling"/>
</dbReference>
<dbReference type="Reactome" id="R-BTA-5654704">
    <property type="pathway name" value="SHC-mediated cascade:FGFR3"/>
</dbReference>
<dbReference type="Reactome" id="R-BTA-5654706">
    <property type="pathway name" value="FRS-mediated FGFR3 signaling"/>
</dbReference>
<dbReference type="Reactome" id="R-BTA-5654710">
    <property type="pathway name" value="PI-3K cascade:FGFR3"/>
</dbReference>
<dbReference type="Reactome" id="R-BTA-5654726">
    <property type="pathway name" value="Negative regulation of FGFR1 signaling"/>
</dbReference>
<dbReference type="Reactome" id="R-BTA-5654727">
    <property type="pathway name" value="Negative regulation of FGFR2 signaling"/>
</dbReference>
<dbReference type="Reactome" id="R-BTA-5654732">
    <property type="pathway name" value="Negative regulation of FGFR3 signaling"/>
</dbReference>
<dbReference type="Reactome" id="R-BTA-5658623">
    <property type="pathway name" value="FGFRL1 modulation of FGFR1 signaling"/>
</dbReference>
<dbReference type="Reactome" id="R-BTA-5673001">
    <property type="pathway name" value="RAF/MAP kinase cascade"/>
</dbReference>
<dbReference type="Reactome" id="R-BTA-6811558">
    <property type="pathway name" value="PI5P, PP2A and IER3 Regulate PI3K/AKT Signaling"/>
</dbReference>
<dbReference type="Proteomes" id="UP000009136">
    <property type="component" value="Chromosome 6"/>
</dbReference>
<dbReference type="Bgee" id="ENSBTAG00000017348">
    <property type="expression patterns" value="Expressed in oocyte and 19 other cell types or tissues"/>
</dbReference>
<dbReference type="GO" id="GO:0005737">
    <property type="term" value="C:cytoplasm"/>
    <property type="evidence" value="ECO:0000318"/>
    <property type="project" value="GO_Central"/>
</dbReference>
<dbReference type="GO" id="GO:0005615">
    <property type="term" value="C:extracellular space"/>
    <property type="evidence" value="ECO:0000318"/>
    <property type="project" value="GO_Central"/>
</dbReference>
<dbReference type="GO" id="GO:0005104">
    <property type="term" value="F:fibroblast growth factor receptor binding"/>
    <property type="evidence" value="ECO:0000318"/>
    <property type="project" value="GO_Central"/>
</dbReference>
<dbReference type="GO" id="GO:0008083">
    <property type="term" value="F:growth factor activity"/>
    <property type="evidence" value="ECO:0000318"/>
    <property type="project" value="GO_Central"/>
</dbReference>
<dbReference type="GO" id="GO:0008543">
    <property type="term" value="P:fibroblast growth factor receptor signaling pathway"/>
    <property type="evidence" value="ECO:0000318"/>
    <property type="project" value="GO_Central"/>
</dbReference>
<dbReference type="GO" id="GO:0022008">
    <property type="term" value="P:neurogenesis"/>
    <property type="evidence" value="ECO:0000318"/>
    <property type="project" value="GO_Central"/>
</dbReference>
<dbReference type="GO" id="GO:0051781">
    <property type="term" value="P:positive regulation of cell division"/>
    <property type="evidence" value="ECO:0007669"/>
    <property type="project" value="UniProtKB-KW"/>
</dbReference>
<dbReference type="GO" id="GO:0008284">
    <property type="term" value="P:positive regulation of cell population proliferation"/>
    <property type="evidence" value="ECO:0000318"/>
    <property type="project" value="GO_Central"/>
</dbReference>
<dbReference type="GO" id="GO:0043410">
    <property type="term" value="P:positive regulation of MAPK cascade"/>
    <property type="evidence" value="ECO:0000318"/>
    <property type="project" value="GO_Central"/>
</dbReference>
<dbReference type="GO" id="GO:0030334">
    <property type="term" value="P:regulation of cell migration"/>
    <property type="evidence" value="ECO:0000318"/>
    <property type="project" value="GO_Central"/>
</dbReference>
<dbReference type="CDD" id="cd23317">
    <property type="entry name" value="beta-trefoil_FGF5"/>
    <property type="match status" value="1"/>
</dbReference>
<dbReference type="FunFam" id="2.80.10.50:FF:000042">
    <property type="entry name" value="Fibroblast growth factor"/>
    <property type="match status" value="1"/>
</dbReference>
<dbReference type="Gene3D" id="2.80.10.50">
    <property type="match status" value="1"/>
</dbReference>
<dbReference type="InterPro" id="IPR002209">
    <property type="entry name" value="Fibroblast_GF_fam"/>
</dbReference>
<dbReference type="InterPro" id="IPR008996">
    <property type="entry name" value="IL1/FGF"/>
</dbReference>
<dbReference type="PANTHER" id="PTHR11486">
    <property type="entry name" value="FIBROBLAST GROWTH FACTOR"/>
    <property type="match status" value="1"/>
</dbReference>
<dbReference type="Pfam" id="PF00167">
    <property type="entry name" value="FGF"/>
    <property type="match status" value="1"/>
</dbReference>
<dbReference type="PRINTS" id="PR00263">
    <property type="entry name" value="HBGFFGF"/>
</dbReference>
<dbReference type="PRINTS" id="PR00262">
    <property type="entry name" value="IL1HBGF"/>
</dbReference>
<dbReference type="SMART" id="SM00442">
    <property type="entry name" value="FGF"/>
    <property type="match status" value="1"/>
</dbReference>
<dbReference type="SUPFAM" id="SSF50353">
    <property type="entry name" value="Cytokine"/>
    <property type="match status" value="1"/>
</dbReference>
<dbReference type="PROSITE" id="PS00247">
    <property type="entry name" value="HBGF_FGF"/>
    <property type="match status" value="1"/>
</dbReference>